<reference key="1">
    <citation type="journal article" date="1999" name="J. Biol. Chem.">
        <title>Isolation of a cDNA encoding human lysophosphatidic acid phosphatase that is involved in the regulation of mitochondrial lipid biosynthesis.</title>
        <authorList>
            <person name="Hiroyama M."/>
            <person name="Takenawa T."/>
        </authorList>
    </citation>
    <scope>NUCLEOTIDE SEQUENCE [MRNA] (ISOFORM 1)</scope>
    <scope>FUNCTION</scope>
    <scope>TISSUE SPECIFICITY</scope>
    <scope>SUBCELLULAR LOCATION</scope>
    <scope>MUTAGENESIS OF HIS-59</scope>
    <scope>INDUCTION</scope>
    <scope>CATALYTIC ACTIVITY</scope>
    <scope>SUBSTRATE SPECIFICITY</scope>
    <source>
        <tissue>Brain</tissue>
    </source>
</reference>
<reference key="2">
    <citation type="journal article" date="2002" name="Gut">
        <title>Novel human and mouse genes encoding an acid phosphatase family member and its downregulation in W/W(V) mouse jejunum.</title>
        <authorList>
            <person name="Takayama I."/>
            <person name="Daigo Y."/>
            <person name="Ward S.M."/>
            <person name="Sanders K.M."/>
            <person name="Walker R.L."/>
            <person name="Horowitz B."/>
            <person name="Yamanaka T."/>
            <person name="Fujino M.A."/>
        </authorList>
    </citation>
    <scope>NUCLEOTIDE SEQUENCE [MRNA] (ISOFORM 1)</scope>
    <scope>TISSUE SPECIFICITY</scope>
</reference>
<reference key="3">
    <citation type="journal article" date="2014" name="Nat. Commun.">
        <title>Protein interaction network of alternatively spliced isoforms from brain links genetic risk factors for autism.</title>
        <authorList>
            <person name="Corominas R."/>
            <person name="Yang X."/>
            <person name="Lin G.N."/>
            <person name="Kang S."/>
            <person name="Shen Y."/>
            <person name="Ghamsari L."/>
            <person name="Broly M."/>
            <person name="Rodriguez M."/>
            <person name="Tam S."/>
            <person name="Wanamaker S.A."/>
            <person name="Fan C."/>
            <person name="Yi S."/>
            <person name="Tasan M."/>
            <person name="Lemmens I."/>
            <person name="Kuang X."/>
            <person name="Zhao N."/>
            <person name="Malhotra D."/>
            <person name="Michaelson J.J."/>
            <person name="Vacic V."/>
            <person name="Calderwood M.A."/>
            <person name="Roth F.P."/>
            <person name="Tavernier J."/>
            <person name="Horvath S."/>
            <person name="Salehi-Ashtiani K."/>
            <person name="Korkin D."/>
            <person name="Sebat J."/>
            <person name="Hill D.E."/>
            <person name="Hao T."/>
            <person name="Vidal M."/>
            <person name="Iakoucheva L.M."/>
        </authorList>
    </citation>
    <scope>NUCLEOTIDE SEQUENCE [MRNA] (ISOFORM 1)</scope>
    <source>
        <tissue>Brain</tissue>
    </source>
</reference>
<reference key="4">
    <citation type="journal article" date="2003" name="Genome Res.">
        <title>The secreted protein discovery initiative (SPDI), a large-scale effort to identify novel human secreted and transmembrane proteins: a bioinformatics assessment.</title>
        <authorList>
            <person name="Clark H.F."/>
            <person name="Gurney A.L."/>
            <person name="Abaya E."/>
            <person name="Baker K."/>
            <person name="Baldwin D.T."/>
            <person name="Brush J."/>
            <person name="Chen J."/>
            <person name="Chow B."/>
            <person name="Chui C."/>
            <person name="Crowley C."/>
            <person name="Currell B."/>
            <person name="Deuel B."/>
            <person name="Dowd P."/>
            <person name="Eaton D."/>
            <person name="Foster J.S."/>
            <person name="Grimaldi C."/>
            <person name="Gu Q."/>
            <person name="Hass P.E."/>
            <person name="Heldens S."/>
            <person name="Huang A."/>
            <person name="Kim H.S."/>
            <person name="Klimowski L."/>
            <person name="Jin Y."/>
            <person name="Johnson S."/>
            <person name="Lee J."/>
            <person name="Lewis L."/>
            <person name="Liao D."/>
            <person name="Mark M.R."/>
            <person name="Robbie E."/>
            <person name="Sanchez C."/>
            <person name="Schoenfeld J."/>
            <person name="Seshagiri S."/>
            <person name="Simmons L."/>
            <person name="Singh J."/>
            <person name="Smith V."/>
            <person name="Stinson J."/>
            <person name="Vagts A."/>
            <person name="Vandlen R.L."/>
            <person name="Watanabe C."/>
            <person name="Wieand D."/>
            <person name="Woods K."/>
            <person name="Xie M.-H."/>
            <person name="Yansura D.G."/>
            <person name="Yi S."/>
            <person name="Yu G."/>
            <person name="Yuan J."/>
            <person name="Zhang M."/>
            <person name="Zhang Z."/>
            <person name="Goddard A.D."/>
            <person name="Wood W.I."/>
            <person name="Godowski P.J."/>
            <person name="Gray A.M."/>
        </authorList>
    </citation>
    <scope>NUCLEOTIDE SEQUENCE [LARGE SCALE MRNA] (ISOFORM 1)</scope>
</reference>
<reference key="5">
    <citation type="journal article" date="2004" name="Nat. Genet.">
        <title>Complete sequencing and characterization of 21,243 full-length human cDNAs.</title>
        <authorList>
            <person name="Ota T."/>
            <person name="Suzuki Y."/>
            <person name="Nishikawa T."/>
            <person name="Otsuki T."/>
            <person name="Sugiyama T."/>
            <person name="Irie R."/>
            <person name="Wakamatsu A."/>
            <person name="Hayashi K."/>
            <person name="Sato H."/>
            <person name="Nagai K."/>
            <person name="Kimura K."/>
            <person name="Makita H."/>
            <person name="Sekine M."/>
            <person name="Obayashi M."/>
            <person name="Nishi T."/>
            <person name="Shibahara T."/>
            <person name="Tanaka T."/>
            <person name="Ishii S."/>
            <person name="Yamamoto J."/>
            <person name="Saito K."/>
            <person name="Kawai Y."/>
            <person name="Isono Y."/>
            <person name="Nakamura Y."/>
            <person name="Nagahari K."/>
            <person name="Murakami K."/>
            <person name="Yasuda T."/>
            <person name="Iwayanagi T."/>
            <person name="Wagatsuma M."/>
            <person name="Shiratori A."/>
            <person name="Sudo H."/>
            <person name="Hosoiri T."/>
            <person name="Kaku Y."/>
            <person name="Kodaira H."/>
            <person name="Kondo H."/>
            <person name="Sugawara M."/>
            <person name="Takahashi M."/>
            <person name="Kanda K."/>
            <person name="Yokoi T."/>
            <person name="Furuya T."/>
            <person name="Kikkawa E."/>
            <person name="Omura Y."/>
            <person name="Abe K."/>
            <person name="Kamihara K."/>
            <person name="Katsuta N."/>
            <person name="Sato K."/>
            <person name="Tanikawa M."/>
            <person name="Yamazaki M."/>
            <person name="Ninomiya K."/>
            <person name="Ishibashi T."/>
            <person name="Yamashita H."/>
            <person name="Murakawa K."/>
            <person name="Fujimori K."/>
            <person name="Tanai H."/>
            <person name="Kimata M."/>
            <person name="Watanabe M."/>
            <person name="Hiraoka S."/>
            <person name="Chiba Y."/>
            <person name="Ishida S."/>
            <person name="Ono Y."/>
            <person name="Takiguchi S."/>
            <person name="Watanabe S."/>
            <person name="Yosida M."/>
            <person name="Hotuta T."/>
            <person name="Kusano J."/>
            <person name="Kanehori K."/>
            <person name="Takahashi-Fujii A."/>
            <person name="Hara H."/>
            <person name="Tanase T.-O."/>
            <person name="Nomura Y."/>
            <person name="Togiya S."/>
            <person name="Komai F."/>
            <person name="Hara R."/>
            <person name="Takeuchi K."/>
            <person name="Arita M."/>
            <person name="Imose N."/>
            <person name="Musashino K."/>
            <person name="Yuuki H."/>
            <person name="Oshima A."/>
            <person name="Sasaki N."/>
            <person name="Aotsuka S."/>
            <person name="Yoshikawa Y."/>
            <person name="Matsunawa H."/>
            <person name="Ichihara T."/>
            <person name="Shiohata N."/>
            <person name="Sano S."/>
            <person name="Moriya S."/>
            <person name="Momiyama H."/>
            <person name="Satoh N."/>
            <person name="Takami S."/>
            <person name="Terashima Y."/>
            <person name="Suzuki O."/>
            <person name="Nakagawa S."/>
            <person name="Senoh A."/>
            <person name="Mizoguchi H."/>
            <person name="Goto Y."/>
            <person name="Shimizu F."/>
            <person name="Wakebe H."/>
            <person name="Hishigaki H."/>
            <person name="Watanabe T."/>
            <person name="Sugiyama A."/>
            <person name="Takemoto M."/>
            <person name="Kawakami B."/>
            <person name="Yamazaki M."/>
            <person name="Watanabe K."/>
            <person name="Kumagai A."/>
            <person name="Itakura S."/>
            <person name="Fukuzumi Y."/>
            <person name="Fujimori Y."/>
            <person name="Komiyama M."/>
            <person name="Tashiro H."/>
            <person name="Tanigami A."/>
            <person name="Fujiwara T."/>
            <person name="Ono T."/>
            <person name="Yamada K."/>
            <person name="Fujii Y."/>
            <person name="Ozaki K."/>
            <person name="Hirao M."/>
            <person name="Ohmori Y."/>
            <person name="Kawabata A."/>
            <person name="Hikiji T."/>
            <person name="Kobatake N."/>
            <person name="Inagaki H."/>
            <person name="Ikema Y."/>
            <person name="Okamoto S."/>
            <person name="Okitani R."/>
            <person name="Kawakami T."/>
            <person name="Noguchi S."/>
            <person name="Itoh T."/>
            <person name="Shigeta K."/>
            <person name="Senba T."/>
            <person name="Matsumura K."/>
            <person name="Nakajima Y."/>
            <person name="Mizuno T."/>
            <person name="Morinaga M."/>
            <person name="Sasaki M."/>
            <person name="Togashi T."/>
            <person name="Oyama M."/>
            <person name="Hata H."/>
            <person name="Watanabe M."/>
            <person name="Komatsu T."/>
            <person name="Mizushima-Sugano J."/>
            <person name="Satoh T."/>
            <person name="Shirai Y."/>
            <person name="Takahashi Y."/>
            <person name="Nakagawa K."/>
            <person name="Okumura K."/>
            <person name="Nagase T."/>
            <person name="Nomura N."/>
            <person name="Kikuchi H."/>
            <person name="Masuho Y."/>
            <person name="Yamashita R."/>
            <person name="Nakai K."/>
            <person name="Yada T."/>
            <person name="Nakamura Y."/>
            <person name="Ohara O."/>
            <person name="Isogai T."/>
            <person name="Sugano S."/>
        </authorList>
    </citation>
    <scope>NUCLEOTIDE SEQUENCE [LARGE SCALE MRNA] (ISOFORM 1)</scope>
</reference>
<reference key="6">
    <citation type="submission" date="2005-03" db="EMBL/GenBank/DDBJ databases">
        <authorList>
            <person name="Totoki Y."/>
            <person name="Toyoda A."/>
            <person name="Takeda T."/>
            <person name="Sakaki Y."/>
            <person name="Tanaka A."/>
            <person name="Yokoyama S."/>
            <person name="Ohara O."/>
            <person name="Nagase T."/>
            <person name="Kikuno R.F."/>
        </authorList>
    </citation>
    <scope>NUCLEOTIDE SEQUENCE [LARGE SCALE MRNA] (ISOFORM 2)</scope>
    <source>
        <tissue>Brain</tissue>
    </source>
</reference>
<reference key="7">
    <citation type="journal article" date="2006" name="Nature">
        <title>The DNA sequence and biological annotation of human chromosome 1.</title>
        <authorList>
            <person name="Gregory S.G."/>
            <person name="Barlow K.F."/>
            <person name="McLay K.E."/>
            <person name="Kaul R."/>
            <person name="Swarbreck D."/>
            <person name="Dunham A."/>
            <person name="Scott C.E."/>
            <person name="Howe K.L."/>
            <person name="Woodfine K."/>
            <person name="Spencer C.C.A."/>
            <person name="Jones M.C."/>
            <person name="Gillson C."/>
            <person name="Searle S."/>
            <person name="Zhou Y."/>
            <person name="Kokocinski F."/>
            <person name="McDonald L."/>
            <person name="Evans R."/>
            <person name="Phillips K."/>
            <person name="Atkinson A."/>
            <person name="Cooper R."/>
            <person name="Jones C."/>
            <person name="Hall R.E."/>
            <person name="Andrews T.D."/>
            <person name="Lloyd C."/>
            <person name="Ainscough R."/>
            <person name="Almeida J.P."/>
            <person name="Ambrose K.D."/>
            <person name="Anderson F."/>
            <person name="Andrew R.W."/>
            <person name="Ashwell R.I.S."/>
            <person name="Aubin K."/>
            <person name="Babbage A.K."/>
            <person name="Bagguley C.L."/>
            <person name="Bailey J."/>
            <person name="Beasley H."/>
            <person name="Bethel G."/>
            <person name="Bird C.P."/>
            <person name="Bray-Allen S."/>
            <person name="Brown J.Y."/>
            <person name="Brown A.J."/>
            <person name="Buckley D."/>
            <person name="Burton J."/>
            <person name="Bye J."/>
            <person name="Carder C."/>
            <person name="Chapman J.C."/>
            <person name="Clark S.Y."/>
            <person name="Clarke G."/>
            <person name="Clee C."/>
            <person name="Cobley V."/>
            <person name="Collier R.E."/>
            <person name="Corby N."/>
            <person name="Coville G.J."/>
            <person name="Davies J."/>
            <person name="Deadman R."/>
            <person name="Dunn M."/>
            <person name="Earthrowl M."/>
            <person name="Ellington A.G."/>
            <person name="Errington H."/>
            <person name="Frankish A."/>
            <person name="Frankland J."/>
            <person name="French L."/>
            <person name="Garner P."/>
            <person name="Garnett J."/>
            <person name="Gay L."/>
            <person name="Ghori M.R.J."/>
            <person name="Gibson R."/>
            <person name="Gilby L.M."/>
            <person name="Gillett W."/>
            <person name="Glithero R.J."/>
            <person name="Grafham D.V."/>
            <person name="Griffiths C."/>
            <person name="Griffiths-Jones S."/>
            <person name="Grocock R."/>
            <person name="Hammond S."/>
            <person name="Harrison E.S.I."/>
            <person name="Hart E."/>
            <person name="Haugen E."/>
            <person name="Heath P.D."/>
            <person name="Holmes S."/>
            <person name="Holt K."/>
            <person name="Howden P.J."/>
            <person name="Hunt A.R."/>
            <person name="Hunt S.E."/>
            <person name="Hunter G."/>
            <person name="Isherwood J."/>
            <person name="James R."/>
            <person name="Johnson C."/>
            <person name="Johnson D."/>
            <person name="Joy A."/>
            <person name="Kay M."/>
            <person name="Kershaw J.K."/>
            <person name="Kibukawa M."/>
            <person name="Kimberley A.M."/>
            <person name="King A."/>
            <person name="Knights A.J."/>
            <person name="Lad H."/>
            <person name="Laird G."/>
            <person name="Lawlor S."/>
            <person name="Leongamornlert D.A."/>
            <person name="Lloyd D.M."/>
            <person name="Loveland J."/>
            <person name="Lovell J."/>
            <person name="Lush M.J."/>
            <person name="Lyne R."/>
            <person name="Martin S."/>
            <person name="Mashreghi-Mohammadi M."/>
            <person name="Matthews L."/>
            <person name="Matthews N.S.W."/>
            <person name="McLaren S."/>
            <person name="Milne S."/>
            <person name="Mistry S."/>
            <person name="Moore M.J.F."/>
            <person name="Nickerson T."/>
            <person name="O'Dell C.N."/>
            <person name="Oliver K."/>
            <person name="Palmeiri A."/>
            <person name="Palmer S.A."/>
            <person name="Parker A."/>
            <person name="Patel D."/>
            <person name="Pearce A.V."/>
            <person name="Peck A.I."/>
            <person name="Pelan S."/>
            <person name="Phelps K."/>
            <person name="Phillimore B.J."/>
            <person name="Plumb R."/>
            <person name="Rajan J."/>
            <person name="Raymond C."/>
            <person name="Rouse G."/>
            <person name="Saenphimmachak C."/>
            <person name="Sehra H.K."/>
            <person name="Sheridan E."/>
            <person name="Shownkeen R."/>
            <person name="Sims S."/>
            <person name="Skuce C.D."/>
            <person name="Smith M."/>
            <person name="Steward C."/>
            <person name="Subramanian S."/>
            <person name="Sycamore N."/>
            <person name="Tracey A."/>
            <person name="Tromans A."/>
            <person name="Van Helmond Z."/>
            <person name="Wall M."/>
            <person name="Wallis J.M."/>
            <person name="White S."/>
            <person name="Whitehead S.L."/>
            <person name="Wilkinson J.E."/>
            <person name="Willey D.L."/>
            <person name="Williams H."/>
            <person name="Wilming L."/>
            <person name="Wray P.W."/>
            <person name="Wu Z."/>
            <person name="Coulson A."/>
            <person name="Vaudin M."/>
            <person name="Sulston J.E."/>
            <person name="Durbin R.M."/>
            <person name="Hubbard T."/>
            <person name="Wooster R."/>
            <person name="Dunham I."/>
            <person name="Carter N.P."/>
            <person name="McVean G."/>
            <person name="Ross M.T."/>
            <person name="Harrow J."/>
            <person name="Olson M.V."/>
            <person name="Beck S."/>
            <person name="Rogers J."/>
            <person name="Bentley D.R."/>
        </authorList>
    </citation>
    <scope>NUCLEOTIDE SEQUENCE [LARGE SCALE GENOMIC DNA]</scope>
    <scope>VARIANT VAL-316</scope>
</reference>
<reference key="8">
    <citation type="submission" date="2005-07" db="EMBL/GenBank/DDBJ databases">
        <authorList>
            <person name="Mural R.J."/>
            <person name="Istrail S."/>
            <person name="Sutton G.G."/>
            <person name="Florea L."/>
            <person name="Halpern A.L."/>
            <person name="Mobarry C.M."/>
            <person name="Lippert R."/>
            <person name="Walenz B."/>
            <person name="Shatkay H."/>
            <person name="Dew I."/>
            <person name="Miller J.R."/>
            <person name="Flanigan M.J."/>
            <person name="Edwards N.J."/>
            <person name="Bolanos R."/>
            <person name="Fasulo D."/>
            <person name="Halldorsson B.V."/>
            <person name="Hannenhalli S."/>
            <person name="Turner R."/>
            <person name="Yooseph S."/>
            <person name="Lu F."/>
            <person name="Nusskern D.R."/>
            <person name="Shue B.C."/>
            <person name="Zheng X.H."/>
            <person name="Zhong F."/>
            <person name="Delcher A.L."/>
            <person name="Huson D.H."/>
            <person name="Kravitz S.A."/>
            <person name="Mouchard L."/>
            <person name="Reinert K."/>
            <person name="Remington K.A."/>
            <person name="Clark A.G."/>
            <person name="Waterman M.S."/>
            <person name="Eichler E.E."/>
            <person name="Adams M.D."/>
            <person name="Hunkapiller M.W."/>
            <person name="Myers E.W."/>
            <person name="Venter J.C."/>
        </authorList>
    </citation>
    <scope>NUCLEOTIDE SEQUENCE [LARGE SCALE GENOMIC DNA]</scope>
</reference>
<reference key="9">
    <citation type="journal article" date="2004" name="Genome Res.">
        <title>The status, quality, and expansion of the NIH full-length cDNA project: the Mammalian Gene Collection (MGC).</title>
        <authorList>
            <consortium name="The MGC Project Team"/>
        </authorList>
    </citation>
    <scope>NUCLEOTIDE SEQUENCE [LARGE SCALE MRNA] (ISOFORM 1)</scope>
    <source>
        <tissue>Cervix</tissue>
        <tissue>Pancreas</tissue>
    </source>
</reference>
<reference key="10">
    <citation type="submission" date="2004-06" db="EMBL/GenBank/DDBJ databases">
        <title>Cloning of human full open reading frames in Gateway(TM) system entry vector (pDONR201).</title>
        <authorList>
            <person name="Ebert L."/>
            <person name="Schick M."/>
            <person name="Neubert P."/>
            <person name="Schatten R."/>
            <person name="Henze S."/>
            <person name="Korn B."/>
        </authorList>
    </citation>
    <scope>NUCLEOTIDE SEQUENCE [LARGE SCALE MRNA] OF 8-428 (ISOFORM 1)</scope>
</reference>
<reference key="11">
    <citation type="journal article" date="2004" name="Protein Sci.">
        <title>Signal peptide prediction based on analysis of experimentally verified cleavage sites.</title>
        <authorList>
            <person name="Zhang Z."/>
            <person name="Henzel W.J."/>
        </authorList>
    </citation>
    <scope>PROTEIN SEQUENCE OF 33-47</scope>
</reference>
<reference key="12">
    <citation type="journal article" date="2013" name="Protein Cell">
        <title>Crystal structures and biochemical studies of human lysophosphatidic acid phosphatase type 6.</title>
        <authorList>
            <person name="Li J."/>
            <person name="Dong Y."/>
            <person name="Lu X."/>
            <person name="Wang L."/>
            <person name="Peng W."/>
            <person name="Zhang X.C."/>
            <person name="Rao Z."/>
        </authorList>
    </citation>
    <scope>X-RAY CRYSTALLOGRAPHY (2.17 ANGSTROMS) OF 33-428 IN COMPLEXES WITH MALONATE AND TARTRATE</scope>
    <scope>ACTIVE SITE</scope>
    <scope>PROBABLE SUBSTRATE-BINDING SITES</scope>
    <scope>CATALYTIC ACTIVITY</scope>
    <scope>FUNCTION</scope>
    <scope>SUBUNIT</scope>
    <scope>MUTAGENESIS OF ARG-58; HIS-59; ARG-62; TYR-106; ARG-168; ALA-257; SER-285; LEU-289; HIS-334 AND ASP-335</scope>
</reference>
<comment type="function">
    <text evidence="2 5">Hydrolyzes lysophosphatidic acid (LPA) containing a medium length fatty acid chain to the corresponding monoacylglycerol. Has highest activity with lysophosphatidic acid containing myristate (C14:0), monounsaturated oleate (C18:1) or palmitate (C16:0), and lower activity with C18:0 and C6:0 lysophosphatidic acid.</text>
</comment>
<comment type="catalytic activity">
    <reaction evidence="2 5">
        <text>a phosphate monoester + H2O = an alcohol + phosphate</text>
        <dbReference type="Rhea" id="RHEA:15017"/>
        <dbReference type="ChEBI" id="CHEBI:15377"/>
        <dbReference type="ChEBI" id="CHEBI:30879"/>
        <dbReference type="ChEBI" id="CHEBI:43474"/>
        <dbReference type="ChEBI" id="CHEBI:67140"/>
        <dbReference type="EC" id="3.1.3.2"/>
    </reaction>
    <physiologicalReaction direction="left-to-right" evidence="8">
        <dbReference type="Rhea" id="RHEA:15018"/>
    </physiologicalReaction>
</comment>
<comment type="catalytic activity">
    <reaction evidence="2">
        <text>1-(9Z-octadecenoyl)-sn-glycero-3-phosphate + H2O = 1-(9Z-octadecenoyl)-sn-glycerol + phosphate</text>
        <dbReference type="Rhea" id="RHEA:39835"/>
        <dbReference type="ChEBI" id="CHEBI:15377"/>
        <dbReference type="ChEBI" id="CHEBI:43474"/>
        <dbReference type="ChEBI" id="CHEBI:74544"/>
        <dbReference type="ChEBI" id="CHEBI:75757"/>
    </reaction>
    <physiologicalReaction direction="left-to-right" evidence="8">
        <dbReference type="Rhea" id="RHEA:39836"/>
    </physiologicalReaction>
</comment>
<comment type="subunit">
    <text evidence="5">Monomer.</text>
</comment>
<comment type="subcellular location">
    <subcellularLocation>
        <location evidence="2">Mitochondrion</location>
    </subcellularLocation>
</comment>
<comment type="alternative products">
    <event type="alternative splicing"/>
    <isoform>
        <id>Q9NPH0-1</id>
        <name>1</name>
        <sequence type="displayed"/>
    </isoform>
    <isoform>
        <id>Q9NPH0-2</id>
        <name>2</name>
        <sequence type="described" ref="VSP_014121 VSP_014122"/>
    </isoform>
</comment>
<comment type="tissue specificity">
    <text evidence="2 3">Highly expressed in kidney, heart, small intestine, muscle, liver, prostate, testis, ovary and weakly expressed in thymus and colon.</text>
</comment>
<comment type="induction">
    <text evidence="2">Induced with the differentiation from myoblast to myotube.</text>
</comment>
<comment type="similarity">
    <text evidence="7">Belongs to the histidine acid phosphatase family.</text>
</comment>
<comment type="caution">
    <text evidence="7">It is uncertain whether Met-1 or Met-8 is the initiator.</text>
</comment>
<comment type="caution">
    <text evidence="8">Was originally reported to be located in the mitochondrion, but the evidence seems to be weak and contradictory with the presence of a cleaved signal sequence.</text>
</comment>
<comment type="sequence caution" evidence="7">
    <conflict type="erroneous initiation">
        <sequence resource="EMBL-CDS" id="BAA89311"/>
    </conflict>
    <text>Truncated N-terminus.</text>
</comment>
<comment type="sequence caution" evidence="7">
    <conflict type="erroneous initiation">
        <sequence resource="EMBL-CDS" id="BAD92485"/>
    </conflict>
    <text>Extended N-terminus.</text>
</comment>
<organism>
    <name type="scientific">Homo sapiens</name>
    <name type="common">Human</name>
    <dbReference type="NCBI Taxonomy" id="9606"/>
    <lineage>
        <taxon>Eukaryota</taxon>
        <taxon>Metazoa</taxon>
        <taxon>Chordata</taxon>
        <taxon>Craniata</taxon>
        <taxon>Vertebrata</taxon>
        <taxon>Euteleostomi</taxon>
        <taxon>Mammalia</taxon>
        <taxon>Eutheria</taxon>
        <taxon>Euarchontoglires</taxon>
        <taxon>Primates</taxon>
        <taxon>Haplorrhini</taxon>
        <taxon>Catarrhini</taxon>
        <taxon>Hominidae</taxon>
        <taxon>Homo</taxon>
    </lineage>
</organism>
<feature type="transit peptide" description="Mitochondrion" evidence="4">
    <location>
        <begin position="1"/>
        <end position="32"/>
    </location>
</feature>
<feature type="chain" id="PRO_0000023965" description="Lysophosphatidic acid phosphatase type 6">
    <location>
        <begin position="33"/>
        <end position="428"/>
    </location>
</feature>
<feature type="region of interest" description="Substrate binding" evidence="1">
    <location>
        <begin position="58"/>
        <end position="168"/>
    </location>
</feature>
<feature type="active site" description="Nucleophile" evidence="5">
    <location>
        <position position="59"/>
    </location>
</feature>
<feature type="active site" description="Proton donor" evidence="9">
    <location>
        <position position="335"/>
    </location>
</feature>
<feature type="splice variant" id="VSP_014121" description="In isoform 2." evidence="6">
    <original>AHNLPSCPMLK</original>
    <variation>EKMGSCRFHGS</variation>
    <location>
        <begin position="261"/>
        <end position="271"/>
    </location>
</feature>
<feature type="splice variant" id="VSP_014122" description="In isoform 2." evidence="6">
    <location>
        <begin position="272"/>
        <end position="428"/>
    </location>
</feature>
<feature type="sequence variant" id="VAR_022678" description="In dbSNP:rs6593795.">
    <original>M</original>
    <variation>V</variation>
    <location>
        <position position="316"/>
    </location>
</feature>
<feature type="mutagenesis site" description="Abolishes enzyme activity." evidence="5">
    <original>R</original>
    <variation>A</variation>
    <location>
        <position position="58"/>
    </location>
</feature>
<feature type="mutagenesis site" description="Abolishes enzyme activity." evidence="2 5">
    <original>H</original>
    <variation>A</variation>
    <location>
        <position position="59"/>
    </location>
</feature>
<feature type="mutagenesis site" description="Abolishes enzyme activity." evidence="5">
    <original>R</original>
    <variation>A</variation>
    <location>
        <position position="62"/>
    </location>
</feature>
<feature type="mutagenesis site" description="Decreases enzyme activity." evidence="5">
    <original>Y</original>
    <variation>F</variation>
    <location>
        <position position="106"/>
    </location>
</feature>
<feature type="mutagenesis site" description="Decreases enzyme activity.">
    <original>Y</original>
    <variation>F</variation>
    <location>
        <position position="110"/>
    </location>
</feature>
<feature type="mutagenesis site" description="Abolishes enzyme activity." evidence="5">
    <original>R</original>
    <variation>A</variation>
    <location>
        <position position="168"/>
    </location>
</feature>
<feature type="mutagenesis site" description="Decreases enzyme activity by interfering with water access to the active site cavity." evidence="5">
    <original>A</original>
    <variation>F</variation>
    <variation>L</variation>
    <location>
        <position position="257"/>
    </location>
</feature>
<feature type="mutagenesis site" description="Abolishes enzyme activity by interfering with water access to the active site cavity." evidence="5">
    <original>A</original>
    <variation>W</variation>
    <location>
        <position position="257"/>
    </location>
</feature>
<feature type="mutagenesis site" description="Decreases activity toward substrates with medium and long aliphatic chains, but not toward substrates with short aliphatic chains." evidence="5">
    <original>S</original>
    <variation>W</variation>
    <location>
        <position position="285"/>
    </location>
</feature>
<feature type="mutagenesis site" description="Decreases activity toward substrates with medium and long aliphatic chains, but not toward substrates with short aliphatic chains." evidence="5">
    <original>L</original>
    <variation>W</variation>
    <location>
        <position position="289"/>
    </location>
</feature>
<feature type="mutagenesis site" description="Abolishes enzyme activity." evidence="5">
    <original>H</original>
    <variation>A</variation>
    <location>
        <position position="334"/>
    </location>
</feature>
<feature type="mutagenesis site" description="Abolishes enzyme activity." evidence="5">
    <original>D</original>
    <variation>A</variation>
    <location>
        <position position="335"/>
    </location>
</feature>
<feature type="sequence conflict" description="In Ref. 10; CAG33382." evidence="7" ref="10">
    <original>E</original>
    <variation>D</variation>
    <location>
        <position position="428"/>
    </location>
</feature>
<feature type="helix" evidence="10">
    <location>
        <begin position="45"/>
        <end position="47"/>
    </location>
</feature>
<feature type="strand" evidence="10">
    <location>
        <begin position="48"/>
        <end position="58"/>
    </location>
</feature>
<feature type="strand" evidence="10">
    <location>
        <begin position="69"/>
        <end position="71"/>
    </location>
</feature>
<feature type="helix" evidence="10">
    <location>
        <begin position="78"/>
        <end position="81"/>
    </location>
</feature>
<feature type="helix" evidence="10">
    <location>
        <begin position="85"/>
        <end position="87"/>
    </location>
</feature>
<feature type="strand" evidence="10">
    <location>
        <begin position="92"/>
        <end position="100"/>
    </location>
</feature>
<feature type="helix" evidence="12">
    <location>
        <begin position="105"/>
        <end position="111"/>
    </location>
</feature>
<feature type="turn" evidence="11">
    <location>
        <begin position="116"/>
        <end position="118"/>
    </location>
</feature>
<feature type="helix" evidence="10">
    <location>
        <begin position="126"/>
        <end position="143"/>
    </location>
</feature>
<feature type="turn" evidence="11">
    <location>
        <begin position="144"/>
        <end position="146"/>
    </location>
</feature>
<feature type="strand" evidence="10">
    <location>
        <begin position="152"/>
        <end position="154"/>
    </location>
</feature>
<feature type="turn" evidence="10">
    <location>
        <begin position="156"/>
        <end position="158"/>
    </location>
</feature>
<feature type="strand" evidence="10">
    <location>
        <begin position="159"/>
        <end position="163"/>
    </location>
</feature>
<feature type="helix" evidence="10">
    <location>
        <begin position="167"/>
        <end position="181"/>
    </location>
</feature>
<feature type="strand" evidence="10">
    <location>
        <begin position="185"/>
        <end position="187"/>
    </location>
</feature>
<feature type="strand" evidence="10">
    <location>
        <begin position="190"/>
        <end position="193"/>
    </location>
</feature>
<feature type="turn" evidence="10">
    <location>
        <begin position="196"/>
        <end position="198"/>
    </location>
</feature>
<feature type="turn" evidence="10">
    <location>
        <begin position="205"/>
        <end position="207"/>
    </location>
</feature>
<feature type="helix" evidence="10">
    <location>
        <begin position="209"/>
        <end position="221"/>
    </location>
</feature>
<feature type="helix" evidence="10">
    <location>
        <begin position="222"/>
        <end position="224"/>
    </location>
</feature>
<feature type="helix" evidence="10">
    <location>
        <begin position="228"/>
        <end position="238"/>
    </location>
</feature>
<feature type="helix" evidence="10">
    <location>
        <begin position="249"/>
        <end position="261"/>
    </location>
</feature>
<feature type="helix" evidence="10">
    <location>
        <begin position="268"/>
        <end position="272"/>
    </location>
</feature>
<feature type="helix" evidence="10">
    <location>
        <begin position="274"/>
        <end position="288"/>
    </location>
</feature>
<feature type="helix" evidence="10">
    <location>
        <begin position="294"/>
        <end position="314"/>
    </location>
</feature>
<feature type="strand" evidence="12">
    <location>
        <begin position="318"/>
        <end position="320"/>
    </location>
</feature>
<feature type="turn" evidence="12">
    <location>
        <begin position="322"/>
        <end position="324"/>
    </location>
</feature>
<feature type="strand" evidence="10">
    <location>
        <begin position="327"/>
        <end position="333"/>
    </location>
</feature>
<feature type="helix" evidence="10">
    <location>
        <begin position="335"/>
        <end position="344"/>
    </location>
</feature>
<feature type="strand" evidence="10">
    <location>
        <begin position="358"/>
        <end position="366"/>
    </location>
</feature>
<feature type="turn" evidence="10">
    <location>
        <begin position="367"/>
        <end position="369"/>
    </location>
</feature>
<feature type="strand" evidence="10">
    <location>
        <begin position="372"/>
        <end position="378"/>
    </location>
</feature>
<feature type="strand" evidence="11">
    <location>
        <begin position="381"/>
        <end position="383"/>
    </location>
</feature>
<feature type="strand" evidence="10">
    <location>
        <begin position="389"/>
        <end position="394"/>
    </location>
</feature>
<feature type="helix" evidence="10">
    <location>
        <begin position="395"/>
        <end position="402"/>
    </location>
</feature>
<feature type="turn" evidence="10">
    <location>
        <begin position="403"/>
        <end position="405"/>
    </location>
</feature>
<feature type="helix" evidence="10">
    <location>
        <begin position="409"/>
        <end position="416"/>
    </location>
</feature>
<gene>
    <name type="primary">ACP6</name>
    <name type="synonym">ACPL1</name>
    <name type="synonym">LPAP</name>
    <name type="ORF">UNQ205/PRO231</name>
</gene>
<keyword id="KW-0002">3D-structure</keyword>
<keyword id="KW-0025">Alternative splicing</keyword>
<keyword id="KW-0903">Direct protein sequencing</keyword>
<keyword id="KW-0378">Hydrolase</keyword>
<keyword id="KW-0443">Lipid metabolism</keyword>
<keyword id="KW-0496">Mitochondrion</keyword>
<keyword id="KW-1208">Phospholipid metabolism</keyword>
<keyword id="KW-1267">Proteomics identification</keyword>
<keyword id="KW-1185">Reference proteome</keyword>
<keyword id="KW-0809">Transit peptide</keyword>
<dbReference type="EC" id="3.1.3.2" evidence="2 5"/>
<dbReference type="EMBL" id="AB031478">
    <property type="protein sequence ID" value="BAA89311.1"/>
    <property type="status" value="ALT_INIT"/>
    <property type="molecule type" value="mRNA"/>
</dbReference>
<dbReference type="EMBL" id="AB030039">
    <property type="protein sequence ID" value="BAA94309.2"/>
    <property type="molecule type" value="mRNA"/>
</dbReference>
<dbReference type="EMBL" id="KJ534759">
    <property type="protein sequence ID" value="AHW56399.1"/>
    <property type="molecule type" value="mRNA"/>
</dbReference>
<dbReference type="EMBL" id="AY358552">
    <property type="protein sequence ID" value="AAQ88916.1"/>
    <property type="molecule type" value="mRNA"/>
</dbReference>
<dbReference type="EMBL" id="AK000657">
    <property type="protein sequence ID" value="BAA91310.1"/>
    <property type="molecule type" value="mRNA"/>
</dbReference>
<dbReference type="EMBL" id="AB209248">
    <property type="protein sequence ID" value="BAD92485.1"/>
    <property type="status" value="ALT_INIT"/>
    <property type="molecule type" value="mRNA"/>
</dbReference>
<dbReference type="EMBL" id="AC241644">
    <property type="status" value="NOT_ANNOTATED_CDS"/>
    <property type="molecule type" value="Genomic_DNA"/>
</dbReference>
<dbReference type="EMBL" id="AC242628">
    <property type="status" value="NOT_ANNOTATED_CDS"/>
    <property type="molecule type" value="Genomic_DNA"/>
</dbReference>
<dbReference type="EMBL" id="AL359207">
    <property type="protein sequence ID" value="CAI15199.1"/>
    <property type="molecule type" value="Genomic_DNA"/>
</dbReference>
<dbReference type="EMBL" id="CH471223">
    <property type="protein sequence ID" value="EAW50931.1"/>
    <property type="molecule type" value="Genomic_DNA"/>
</dbReference>
<dbReference type="EMBL" id="BC009965">
    <property type="protein sequence ID" value="AAH09965.1"/>
    <property type="molecule type" value="mRNA"/>
</dbReference>
<dbReference type="EMBL" id="BC034686">
    <property type="protein sequence ID" value="AAH34686.1"/>
    <property type="molecule type" value="mRNA"/>
</dbReference>
<dbReference type="EMBL" id="CR457101">
    <property type="protein sequence ID" value="CAG33382.1"/>
    <property type="molecule type" value="mRNA"/>
</dbReference>
<dbReference type="CCDS" id="CCDS928.1">
    <molecule id="Q9NPH0-1"/>
</dbReference>
<dbReference type="RefSeq" id="NP_057445.4">
    <molecule id="Q9NPH0-1"/>
    <property type="nucleotide sequence ID" value="NM_016361.4"/>
</dbReference>
<dbReference type="PDB" id="4JOB">
    <property type="method" value="X-ray"/>
    <property type="resolution" value="2.17 A"/>
    <property type="chains" value="A=33-428"/>
</dbReference>
<dbReference type="PDB" id="4JOC">
    <property type="method" value="X-ray"/>
    <property type="resolution" value="2.21 A"/>
    <property type="chains" value="A=33-428"/>
</dbReference>
<dbReference type="PDB" id="4JOD">
    <property type="method" value="X-ray"/>
    <property type="resolution" value="2.21 A"/>
    <property type="chains" value="A=33-428"/>
</dbReference>
<dbReference type="PDBsum" id="4JOB"/>
<dbReference type="PDBsum" id="4JOC"/>
<dbReference type="PDBsum" id="4JOD"/>
<dbReference type="SMR" id="Q9NPH0"/>
<dbReference type="BioGRID" id="119378">
    <property type="interactions" value="33"/>
</dbReference>
<dbReference type="FunCoup" id="Q9NPH0">
    <property type="interactions" value="737"/>
</dbReference>
<dbReference type="IntAct" id="Q9NPH0">
    <property type="interactions" value="16"/>
</dbReference>
<dbReference type="STRING" id="9606.ENSP00000463574"/>
<dbReference type="SwissLipids" id="SLP:000001294"/>
<dbReference type="DEPOD" id="ACP6"/>
<dbReference type="iPTMnet" id="Q9NPH0"/>
<dbReference type="PhosphoSitePlus" id="Q9NPH0"/>
<dbReference type="SwissPalm" id="Q9NPH0"/>
<dbReference type="BioMuta" id="ACP6"/>
<dbReference type="DMDM" id="317373268"/>
<dbReference type="jPOST" id="Q9NPH0"/>
<dbReference type="MassIVE" id="Q9NPH0"/>
<dbReference type="PaxDb" id="9606-ENSP00000463574"/>
<dbReference type="PeptideAtlas" id="Q9NPH0"/>
<dbReference type="ProteomicsDB" id="81995">
    <molecule id="Q9NPH0-1"/>
</dbReference>
<dbReference type="ProteomicsDB" id="81996">
    <molecule id="Q9NPH0-2"/>
</dbReference>
<dbReference type="Pumba" id="Q9NPH0"/>
<dbReference type="Antibodypedia" id="33980">
    <property type="antibodies" value="176 antibodies from 23 providers"/>
</dbReference>
<dbReference type="DNASU" id="51205"/>
<dbReference type="Ensembl" id="ENST00000487562.5">
    <molecule id="Q9NPH0-2"/>
    <property type="protein sequence ID" value="ENSP00000481777.1"/>
    <property type="gene ID" value="ENSG00000162836.12"/>
</dbReference>
<dbReference type="Ensembl" id="ENST00000583509.7">
    <molecule id="Q9NPH0-1"/>
    <property type="protein sequence ID" value="ENSP00000463574.1"/>
    <property type="gene ID" value="ENSG00000162836.12"/>
</dbReference>
<dbReference type="GeneID" id="51205"/>
<dbReference type="KEGG" id="hsa:51205"/>
<dbReference type="MANE-Select" id="ENST00000583509.7">
    <property type="protein sequence ID" value="ENSP00000463574.1"/>
    <property type="RefSeq nucleotide sequence ID" value="NM_016361.5"/>
    <property type="RefSeq protein sequence ID" value="NP_057445.4"/>
</dbReference>
<dbReference type="UCSC" id="uc001epr.3">
    <property type="organism name" value="human"/>
</dbReference>
<dbReference type="AGR" id="HGNC:29609"/>
<dbReference type="CTD" id="51205"/>
<dbReference type="DisGeNET" id="51205"/>
<dbReference type="GeneCards" id="ACP6"/>
<dbReference type="HGNC" id="HGNC:29609">
    <property type="gene designation" value="ACP6"/>
</dbReference>
<dbReference type="HPA" id="ENSG00000162836">
    <property type="expression patterns" value="Low tissue specificity"/>
</dbReference>
<dbReference type="MalaCards" id="ACP6"/>
<dbReference type="MIM" id="611471">
    <property type="type" value="gene"/>
</dbReference>
<dbReference type="neXtProt" id="NX_Q9NPH0"/>
<dbReference type="OpenTargets" id="ENSG00000162836"/>
<dbReference type="PharmGKB" id="PA134930830"/>
<dbReference type="VEuPathDB" id="HostDB:ENSG00000162836"/>
<dbReference type="eggNOG" id="KOG3720">
    <property type="taxonomic scope" value="Eukaryota"/>
</dbReference>
<dbReference type="GeneTree" id="ENSGT00940000158408"/>
<dbReference type="HOGENOM" id="CLU_030431_5_1_1"/>
<dbReference type="InParanoid" id="Q9NPH0"/>
<dbReference type="OMA" id="SWPPFTS"/>
<dbReference type="OrthoDB" id="10257284at2759"/>
<dbReference type="PAN-GO" id="Q9NPH0">
    <property type="GO annotations" value="4 GO annotations based on evolutionary models"/>
</dbReference>
<dbReference type="PhylomeDB" id="Q9NPH0"/>
<dbReference type="TreeFam" id="TF318821"/>
<dbReference type="BRENDA" id="3.1.3.106">
    <property type="organism ID" value="2681"/>
</dbReference>
<dbReference type="PathwayCommons" id="Q9NPH0"/>
<dbReference type="Reactome" id="R-HSA-1483166">
    <property type="pathway name" value="Synthesis of PA"/>
</dbReference>
<dbReference type="SignaLink" id="Q9NPH0"/>
<dbReference type="BioGRID-ORCS" id="51205">
    <property type="hits" value="10 hits in 1160 CRISPR screens"/>
</dbReference>
<dbReference type="ChiTaRS" id="ACP6">
    <property type="organism name" value="human"/>
</dbReference>
<dbReference type="EvolutionaryTrace" id="Q9NPH0"/>
<dbReference type="GeneWiki" id="ACP6"/>
<dbReference type="GenomeRNAi" id="51205"/>
<dbReference type="Pharos" id="Q9NPH0">
    <property type="development level" value="Tbio"/>
</dbReference>
<dbReference type="PRO" id="PR:Q9NPH0"/>
<dbReference type="Proteomes" id="UP000005640">
    <property type="component" value="Chromosome 1"/>
</dbReference>
<dbReference type="RNAct" id="Q9NPH0">
    <property type="molecule type" value="protein"/>
</dbReference>
<dbReference type="Bgee" id="ENSG00000162836">
    <property type="expression patterns" value="Expressed in right uterine tube and 174 other cell types or tissues"/>
</dbReference>
<dbReference type="ExpressionAtlas" id="Q9NPH0">
    <property type="expression patterns" value="baseline and differential"/>
</dbReference>
<dbReference type="GO" id="GO:0005737">
    <property type="term" value="C:cytoplasm"/>
    <property type="evidence" value="ECO:0000314"/>
    <property type="project" value="MGI"/>
</dbReference>
<dbReference type="GO" id="GO:0005759">
    <property type="term" value="C:mitochondrial matrix"/>
    <property type="evidence" value="ECO:0000304"/>
    <property type="project" value="Reactome"/>
</dbReference>
<dbReference type="GO" id="GO:0005739">
    <property type="term" value="C:mitochondrion"/>
    <property type="evidence" value="ECO:0000314"/>
    <property type="project" value="UniProtKB"/>
</dbReference>
<dbReference type="GO" id="GO:0003993">
    <property type="term" value="F:acid phosphatase activity"/>
    <property type="evidence" value="ECO:0007669"/>
    <property type="project" value="UniProtKB-EC"/>
</dbReference>
<dbReference type="GO" id="GO:0052642">
    <property type="term" value="F:lysophosphatidic acid phosphatase activity"/>
    <property type="evidence" value="ECO:0000314"/>
    <property type="project" value="UniProtKB"/>
</dbReference>
<dbReference type="GO" id="GO:0002244">
    <property type="term" value="P:hematopoietic progenitor cell differentiation"/>
    <property type="evidence" value="ECO:0007669"/>
    <property type="project" value="Ensembl"/>
</dbReference>
<dbReference type="GO" id="GO:2001311">
    <property type="term" value="P:lysobisphosphatidic acid metabolic process"/>
    <property type="evidence" value="ECO:0000314"/>
    <property type="project" value="UniProtKB"/>
</dbReference>
<dbReference type="GO" id="GO:0006654">
    <property type="term" value="P:phosphatidic acid biosynthetic process"/>
    <property type="evidence" value="ECO:0000304"/>
    <property type="project" value="Reactome"/>
</dbReference>
<dbReference type="GO" id="GO:0006644">
    <property type="term" value="P:phospholipid metabolic process"/>
    <property type="evidence" value="ECO:0000315"/>
    <property type="project" value="UniProtKB"/>
</dbReference>
<dbReference type="CDD" id="cd07061">
    <property type="entry name" value="HP_HAP_like"/>
    <property type="match status" value="1"/>
</dbReference>
<dbReference type="FunFam" id="3.40.50.1240:FF:000030">
    <property type="entry name" value="Lysophosphatidic acid phosphatase type 6"/>
    <property type="match status" value="1"/>
</dbReference>
<dbReference type="Gene3D" id="3.40.50.1240">
    <property type="entry name" value="Phosphoglycerate mutase-like"/>
    <property type="match status" value="1"/>
</dbReference>
<dbReference type="InterPro" id="IPR033379">
    <property type="entry name" value="Acid_Pase_AS"/>
</dbReference>
<dbReference type="InterPro" id="IPR000560">
    <property type="entry name" value="His_Pase_clade-2"/>
</dbReference>
<dbReference type="InterPro" id="IPR029033">
    <property type="entry name" value="His_PPase_superfam"/>
</dbReference>
<dbReference type="InterPro" id="IPR050645">
    <property type="entry name" value="Histidine_acid_phosphatase"/>
</dbReference>
<dbReference type="PANTHER" id="PTHR11567">
    <property type="entry name" value="ACID PHOSPHATASE-RELATED"/>
    <property type="match status" value="1"/>
</dbReference>
<dbReference type="PANTHER" id="PTHR11567:SF202">
    <property type="entry name" value="LYSOPHOSPHATIDIC ACID PHOSPHATASE TYPE 6"/>
    <property type="match status" value="1"/>
</dbReference>
<dbReference type="Pfam" id="PF00328">
    <property type="entry name" value="His_Phos_2"/>
    <property type="match status" value="1"/>
</dbReference>
<dbReference type="SUPFAM" id="SSF53254">
    <property type="entry name" value="Phosphoglycerate mutase-like"/>
    <property type="match status" value="1"/>
</dbReference>
<dbReference type="PROSITE" id="PS00616">
    <property type="entry name" value="HIS_ACID_PHOSPHAT_1"/>
    <property type="match status" value="1"/>
</dbReference>
<name>PPA6_HUMAN</name>
<protein>
    <recommendedName>
        <fullName>Lysophosphatidic acid phosphatase type 6</fullName>
        <ecNumber evidence="2 5">3.1.3.2</ecNumber>
    </recommendedName>
    <alternativeName>
        <fullName>Acid phosphatase 6, lysophosphatidic</fullName>
    </alternativeName>
    <alternativeName>
        <fullName>Acid phosphatase-like protein 1</fullName>
    </alternativeName>
    <alternativeName>
        <fullName>PACPL1</fullName>
    </alternativeName>
</protein>
<evidence type="ECO:0000250" key="1"/>
<evidence type="ECO:0000269" key="2">
    <source>
    </source>
</evidence>
<evidence type="ECO:0000269" key="3">
    <source>
    </source>
</evidence>
<evidence type="ECO:0000269" key="4">
    <source>
    </source>
</evidence>
<evidence type="ECO:0000269" key="5">
    <source>
    </source>
</evidence>
<evidence type="ECO:0000303" key="6">
    <source ref="6"/>
</evidence>
<evidence type="ECO:0000305" key="7"/>
<evidence type="ECO:0000305" key="8">
    <source>
    </source>
</evidence>
<evidence type="ECO:0000305" key="9">
    <source>
    </source>
</evidence>
<evidence type="ECO:0007829" key="10">
    <source>
        <dbReference type="PDB" id="4JOB"/>
    </source>
</evidence>
<evidence type="ECO:0007829" key="11">
    <source>
        <dbReference type="PDB" id="4JOC"/>
    </source>
</evidence>
<evidence type="ECO:0007829" key="12">
    <source>
        <dbReference type="PDB" id="4JOD"/>
    </source>
</evidence>
<proteinExistence type="evidence at protein level"/>
<sequence length="428" mass="48886">MITGVFSMRLWTPVGVLTSLAYCLHQRRVALAELQEADGQCPVDRSLLKLKMVQVVFRHGARSPLKPLPLEEQVEWNPQLLEVPPQTQFDYTVTNLAGGPKPYSPYDSQYHETTLKGGMFAGQLTKVGMQQMFALGERLRKNYVEDIPFLSPTFNPQEVFIRSTNIFRNLESTRCLLAGLFQCQKEGPIIIHTDEADSEVLYPNYQSCWSLRQRTRGRRQTASLQPGISEDLKKVKDRMGIDSSDKVDFFILLDNVAAEQAHNLPSCPMLKRFARMIEQRAVDTSLYILPKEDRESLQMAVGPFLHILESNLLKAMDSATAPDKIRKLYLYAAHDVTFIPLLMTLGIFDHKWPPFAVDLTMELYQHLESKEWFVQLYYHGKEQVPRGCPDGLCPLDMFLNAMSVYTLSPEKYHALCSQTQVMEVGNEE</sequence>
<accession>Q9NPH0</accession>
<accession>Q59G61</accession>
<accession>Q5T490</accession>
<accession>Q6IAQ3</accession>
<accession>Q7LG81</accession>
<accession>Q9UIG6</accession>
<accession>X5D289</accession>